<dbReference type="EC" id="2.1.1.-"/>
<dbReference type="EMBL" id="CP000029">
    <property type="protein sequence ID" value="AAW54807.1"/>
    <property type="molecule type" value="Genomic_DNA"/>
</dbReference>
<dbReference type="SMR" id="Q5HN37"/>
<dbReference type="STRING" id="176279.SERP1435"/>
<dbReference type="KEGG" id="ser:SERP1435"/>
<dbReference type="eggNOG" id="COG2265">
    <property type="taxonomic scope" value="Bacteria"/>
</dbReference>
<dbReference type="HOGENOM" id="CLU_014689_7_1_9"/>
<dbReference type="Proteomes" id="UP000000531">
    <property type="component" value="Chromosome"/>
</dbReference>
<dbReference type="GO" id="GO:0051539">
    <property type="term" value="F:4 iron, 4 sulfur cluster binding"/>
    <property type="evidence" value="ECO:0007669"/>
    <property type="project" value="UniProtKB-KW"/>
</dbReference>
<dbReference type="GO" id="GO:0046872">
    <property type="term" value="F:metal ion binding"/>
    <property type="evidence" value="ECO:0007669"/>
    <property type="project" value="UniProtKB-KW"/>
</dbReference>
<dbReference type="GO" id="GO:0070041">
    <property type="term" value="F:rRNA (uridine-C5-)-methyltransferase activity"/>
    <property type="evidence" value="ECO:0007669"/>
    <property type="project" value="TreeGrafter"/>
</dbReference>
<dbReference type="GO" id="GO:0070475">
    <property type="term" value="P:rRNA base methylation"/>
    <property type="evidence" value="ECO:0007669"/>
    <property type="project" value="TreeGrafter"/>
</dbReference>
<dbReference type="CDD" id="cd02440">
    <property type="entry name" value="AdoMet_MTases"/>
    <property type="match status" value="1"/>
</dbReference>
<dbReference type="FunFam" id="3.40.50.150:FF:000009">
    <property type="entry name" value="23S rRNA (Uracil(1939)-C(5))-methyltransferase RlmD"/>
    <property type="match status" value="1"/>
</dbReference>
<dbReference type="FunFam" id="2.40.50.140:FF:000097">
    <property type="entry name" value="23S rRNA (uracil(1939)-C(5))-methyltransferase RlmD"/>
    <property type="match status" value="1"/>
</dbReference>
<dbReference type="FunFam" id="2.40.50.1070:FF:000003">
    <property type="entry name" value="23S rRNA (Uracil-5-)-methyltransferase RumA"/>
    <property type="match status" value="1"/>
</dbReference>
<dbReference type="Gene3D" id="2.40.50.1070">
    <property type="match status" value="1"/>
</dbReference>
<dbReference type="Gene3D" id="2.40.50.140">
    <property type="entry name" value="Nucleic acid-binding proteins"/>
    <property type="match status" value="1"/>
</dbReference>
<dbReference type="Gene3D" id="3.40.50.150">
    <property type="entry name" value="Vaccinia Virus protein VP39"/>
    <property type="match status" value="1"/>
</dbReference>
<dbReference type="InterPro" id="IPR030390">
    <property type="entry name" value="MeTrfase_TrmA_AS"/>
</dbReference>
<dbReference type="InterPro" id="IPR030391">
    <property type="entry name" value="MeTrfase_TrmA_CS"/>
</dbReference>
<dbReference type="InterPro" id="IPR012340">
    <property type="entry name" value="NA-bd_OB-fold"/>
</dbReference>
<dbReference type="InterPro" id="IPR029063">
    <property type="entry name" value="SAM-dependent_MTases_sf"/>
</dbReference>
<dbReference type="InterPro" id="IPR002792">
    <property type="entry name" value="TRAM_dom"/>
</dbReference>
<dbReference type="InterPro" id="IPR010280">
    <property type="entry name" value="U5_MeTrfase_fam"/>
</dbReference>
<dbReference type="NCBIfam" id="TIGR00479">
    <property type="entry name" value="rumA"/>
    <property type="match status" value="1"/>
</dbReference>
<dbReference type="PANTHER" id="PTHR11061">
    <property type="entry name" value="RNA M5U METHYLTRANSFERASE"/>
    <property type="match status" value="1"/>
</dbReference>
<dbReference type="PANTHER" id="PTHR11061:SF30">
    <property type="entry name" value="TRNA (URACIL(54)-C(5))-METHYLTRANSFERASE"/>
    <property type="match status" value="1"/>
</dbReference>
<dbReference type="Pfam" id="PF05958">
    <property type="entry name" value="tRNA_U5-meth_tr"/>
    <property type="match status" value="1"/>
</dbReference>
<dbReference type="SUPFAM" id="SSF50249">
    <property type="entry name" value="Nucleic acid-binding proteins"/>
    <property type="match status" value="1"/>
</dbReference>
<dbReference type="SUPFAM" id="SSF53335">
    <property type="entry name" value="S-adenosyl-L-methionine-dependent methyltransferases"/>
    <property type="match status" value="1"/>
</dbReference>
<dbReference type="PROSITE" id="PS51687">
    <property type="entry name" value="SAM_MT_RNA_M5U"/>
    <property type="match status" value="1"/>
</dbReference>
<dbReference type="PROSITE" id="PS50926">
    <property type="entry name" value="TRAM"/>
    <property type="match status" value="1"/>
</dbReference>
<dbReference type="PROSITE" id="PS01230">
    <property type="entry name" value="TRMA_1"/>
    <property type="match status" value="1"/>
</dbReference>
<dbReference type="PROSITE" id="PS01231">
    <property type="entry name" value="TRMA_2"/>
    <property type="match status" value="1"/>
</dbReference>
<feature type="chain" id="PRO_0000162022" description="Uncharacterized RNA methyltransferase SERP1435">
    <location>
        <begin position="1"/>
        <end position="456"/>
    </location>
</feature>
<feature type="domain" description="TRAM" evidence="2">
    <location>
        <begin position="3"/>
        <end position="61"/>
    </location>
</feature>
<feature type="active site" description="Nucleophile" evidence="3">
    <location>
        <position position="411"/>
    </location>
</feature>
<feature type="binding site" evidence="1">
    <location>
        <position position="74"/>
    </location>
    <ligand>
        <name>[4Fe-4S] cluster</name>
        <dbReference type="ChEBI" id="CHEBI:49883"/>
    </ligand>
</feature>
<feature type="binding site" evidence="1">
    <location>
        <position position="80"/>
    </location>
    <ligand>
        <name>[4Fe-4S] cluster</name>
        <dbReference type="ChEBI" id="CHEBI:49883"/>
    </ligand>
</feature>
<feature type="binding site" evidence="1">
    <location>
        <position position="83"/>
    </location>
    <ligand>
        <name>[4Fe-4S] cluster</name>
        <dbReference type="ChEBI" id="CHEBI:49883"/>
    </ligand>
</feature>
<feature type="binding site" evidence="1">
    <location>
        <position position="162"/>
    </location>
    <ligand>
        <name>[4Fe-4S] cluster</name>
        <dbReference type="ChEBI" id="CHEBI:49883"/>
    </ligand>
</feature>
<feature type="binding site" evidence="3">
    <location>
        <position position="286"/>
    </location>
    <ligand>
        <name>S-adenosyl-L-methionine</name>
        <dbReference type="ChEBI" id="CHEBI:59789"/>
    </ligand>
</feature>
<feature type="binding site" evidence="3">
    <location>
        <position position="315"/>
    </location>
    <ligand>
        <name>S-adenosyl-L-methionine</name>
        <dbReference type="ChEBI" id="CHEBI:59789"/>
    </ligand>
</feature>
<feature type="binding site" evidence="3">
    <location>
        <position position="336"/>
    </location>
    <ligand>
        <name>S-adenosyl-L-methionine</name>
        <dbReference type="ChEBI" id="CHEBI:59789"/>
    </ligand>
</feature>
<feature type="binding site" evidence="3">
    <location>
        <position position="384"/>
    </location>
    <ligand>
        <name>S-adenosyl-L-methionine</name>
        <dbReference type="ChEBI" id="CHEBI:59789"/>
    </ligand>
</feature>
<comment type="similarity">
    <text evidence="3">Belongs to the class I-like SAM-binding methyltransferase superfamily. RNA M5U methyltransferase family.</text>
</comment>
<gene>
    <name type="ordered locus">SERP1435</name>
</gene>
<protein>
    <recommendedName>
        <fullName>Uncharacterized RNA methyltransferase SERP1435</fullName>
        <ecNumber>2.1.1.-</ecNumber>
    </recommendedName>
</protein>
<name>Y1435_STAEQ</name>
<sequence>METIKKNEVKTGKVIDLTHEGHGVVKVDRYPIFIPNALIDEEIKFKLIKVKKNFAIGKLIEVISESDDRVTPPCIYYAKCGGCQLQHMTYRAQLDMKREQVVNLFHRKGPFENTVIKETIGMVNPWRYRNKSQIPVGQSNSNQVIMGFYRQRSHDIIDMDSCLIQDRQHQEVMNRVKYWLNELNISIYNEKTKTGLIRHLVVRTGYHTDEMMVIFVTNGATFKQSELLVNKLKKEFPNITSIKQNINNSHSNVIMGRQSMTLYGKDKIEDQLSEVTYHISDLSFYQINSSQTEKLYQQALNYAQLTGKEIVLDTYCGIGTIGLYMAPLAKHVYGVEVVPQAIKDAEDNATKNQLKNTTFECGKAEDVILTWKSQGIKPGVVMVDPPRKGCDETFLTTLLKLNPKRIVYISCNPSTQQRDAQILAEQYELVEITPVDMFPQTTHIETVALFVRKDEE</sequence>
<proteinExistence type="inferred from homology"/>
<keyword id="KW-0004">4Fe-4S</keyword>
<keyword id="KW-0408">Iron</keyword>
<keyword id="KW-0411">Iron-sulfur</keyword>
<keyword id="KW-0479">Metal-binding</keyword>
<keyword id="KW-0489">Methyltransferase</keyword>
<keyword id="KW-1185">Reference proteome</keyword>
<keyword id="KW-0949">S-adenosyl-L-methionine</keyword>
<keyword id="KW-0808">Transferase</keyword>
<organism>
    <name type="scientific">Staphylococcus epidermidis (strain ATCC 35984 / DSM 28319 / BCRC 17069 / CCUG 31568 / BM 3577 / RP62A)</name>
    <dbReference type="NCBI Taxonomy" id="176279"/>
    <lineage>
        <taxon>Bacteria</taxon>
        <taxon>Bacillati</taxon>
        <taxon>Bacillota</taxon>
        <taxon>Bacilli</taxon>
        <taxon>Bacillales</taxon>
        <taxon>Staphylococcaceae</taxon>
        <taxon>Staphylococcus</taxon>
    </lineage>
</organism>
<accession>Q5HN37</accession>
<evidence type="ECO:0000250" key="1"/>
<evidence type="ECO:0000255" key="2">
    <source>
        <dbReference type="PROSITE-ProRule" id="PRU00208"/>
    </source>
</evidence>
<evidence type="ECO:0000255" key="3">
    <source>
        <dbReference type="PROSITE-ProRule" id="PRU01024"/>
    </source>
</evidence>
<reference key="1">
    <citation type="journal article" date="2005" name="J. Bacteriol.">
        <title>Insights on evolution of virulence and resistance from the complete genome analysis of an early methicillin-resistant Staphylococcus aureus strain and a biofilm-producing methicillin-resistant Staphylococcus epidermidis strain.</title>
        <authorList>
            <person name="Gill S.R."/>
            <person name="Fouts D.E."/>
            <person name="Archer G.L."/>
            <person name="Mongodin E.F."/>
            <person name="DeBoy R.T."/>
            <person name="Ravel J."/>
            <person name="Paulsen I.T."/>
            <person name="Kolonay J.F."/>
            <person name="Brinkac L.M."/>
            <person name="Beanan M.J."/>
            <person name="Dodson R.J."/>
            <person name="Daugherty S.C."/>
            <person name="Madupu R."/>
            <person name="Angiuoli S.V."/>
            <person name="Durkin A.S."/>
            <person name="Haft D.H."/>
            <person name="Vamathevan J.J."/>
            <person name="Khouri H."/>
            <person name="Utterback T.R."/>
            <person name="Lee C."/>
            <person name="Dimitrov G."/>
            <person name="Jiang L."/>
            <person name="Qin H."/>
            <person name="Weidman J."/>
            <person name="Tran K."/>
            <person name="Kang K.H."/>
            <person name="Hance I.R."/>
            <person name="Nelson K.E."/>
            <person name="Fraser C.M."/>
        </authorList>
    </citation>
    <scope>NUCLEOTIDE SEQUENCE [LARGE SCALE GENOMIC DNA]</scope>
    <source>
        <strain>ATCC 35984 / DSM 28319 / BCRC 17069 / CCUG 31568 / BM 3577 / RP62A</strain>
    </source>
</reference>